<protein>
    <recommendedName>
        <fullName>FOXL2 neighbor protein</fullName>
    </recommendedName>
</protein>
<keyword id="KW-1185">Reference proteome</keyword>
<evidence type="ECO:0000256" key="1">
    <source>
        <dbReference type="SAM" id="MobiDB-lite"/>
    </source>
</evidence>
<organism>
    <name type="scientific">Homo sapiens</name>
    <name type="common">Human</name>
    <dbReference type="NCBI Taxonomy" id="9606"/>
    <lineage>
        <taxon>Eukaryota</taxon>
        <taxon>Metazoa</taxon>
        <taxon>Chordata</taxon>
        <taxon>Craniata</taxon>
        <taxon>Vertebrata</taxon>
        <taxon>Euteleostomi</taxon>
        <taxon>Mammalia</taxon>
        <taxon>Eutheria</taxon>
        <taxon>Euarchontoglires</taxon>
        <taxon>Primates</taxon>
        <taxon>Haplorrhini</taxon>
        <taxon>Catarrhini</taxon>
        <taxon>Hominidae</taxon>
        <taxon>Homo</taxon>
    </lineage>
</organism>
<accession>Q6ZUU3</accession>
<accession>A6NGX0</accession>
<gene>
    <name type="primary">FOXL2NB</name>
    <name type="synonym">C3orf72</name>
</gene>
<dbReference type="EMBL" id="AK125319">
    <property type="protein sequence ID" value="BAC86125.1"/>
    <property type="molecule type" value="mRNA"/>
</dbReference>
<dbReference type="EMBL" id="AC092947">
    <property type="status" value="NOT_ANNOTATED_CDS"/>
    <property type="molecule type" value="Genomic_DNA"/>
</dbReference>
<dbReference type="CCDS" id="CCDS43155.1"/>
<dbReference type="RefSeq" id="NP_001035150.1">
    <property type="nucleotide sequence ID" value="NM_001040061.3"/>
</dbReference>
<dbReference type="BioGRID" id="134915">
    <property type="interactions" value="1"/>
</dbReference>
<dbReference type="FunCoup" id="Q6ZUU3">
    <property type="interactions" value="15"/>
</dbReference>
<dbReference type="STRING" id="9606.ENSP00000372651"/>
<dbReference type="GlyGen" id="Q6ZUU3">
    <property type="glycosylation" value="2 sites, 1 O-linked glycan (2 sites)"/>
</dbReference>
<dbReference type="iPTMnet" id="Q6ZUU3"/>
<dbReference type="PhosphoSitePlus" id="Q6ZUU3"/>
<dbReference type="BioMuta" id="FOXL2NB"/>
<dbReference type="MassIVE" id="Q6ZUU3"/>
<dbReference type="PaxDb" id="9606-ENSP00000372651"/>
<dbReference type="PeptideAtlas" id="Q6ZUU3"/>
<dbReference type="ProteomicsDB" id="68369"/>
<dbReference type="Antibodypedia" id="70523">
    <property type="antibodies" value="19 antibodies from 8 providers"/>
</dbReference>
<dbReference type="DNASU" id="401089"/>
<dbReference type="Ensembl" id="ENST00000383165.4">
    <property type="protein sequence ID" value="ENSP00000372651.3"/>
    <property type="gene ID" value="ENSG00000206262.9"/>
</dbReference>
<dbReference type="GeneID" id="401089"/>
<dbReference type="KEGG" id="hsa:401089"/>
<dbReference type="MANE-Select" id="ENST00000383165.4">
    <property type="protein sequence ID" value="ENSP00000372651.3"/>
    <property type="RefSeq nucleotide sequence ID" value="NM_001040061.3"/>
    <property type="RefSeq protein sequence ID" value="NP_001035150.1"/>
</dbReference>
<dbReference type="UCSC" id="uc003esx.2">
    <property type="organism name" value="human"/>
</dbReference>
<dbReference type="AGR" id="HGNC:34428"/>
<dbReference type="CTD" id="401089"/>
<dbReference type="DisGeNET" id="401089"/>
<dbReference type="GeneCards" id="FOXL2NB"/>
<dbReference type="HGNC" id="HGNC:34428">
    <property type="gene designation" value="FOXL2NB"/>
</dbReference>
<dbReference type="HPA" id="ENSG00000206262">
    <property type="expression patterns" value="Tissue enhanced (ovary, parathyroid gland)"/>
</dbReference>
<dbReference type="MalaCards" id="FOXL2NB"/>
<dbReference type="neXtProt" id="NX_Q6ZUU3"/>
<dbReference type="OpenTargets" id="ENSG00000206262"/>
<dbReference type="PharmGKB" id="PA162379723"/>
<dbReference type="VEuPathDB" id="HostDB:ENSG00000206262"/>
<dbReference type="eggNOG" id="ENOG502TEE5">
    <property type="taxonomic scope" value="Eukaryota"/>
</dbReference>
<dbReference type="GeneTree" id="ENSGT00410000029590"/>
<dbReference type="HOGENOM" id="CLU_1532066_0_0_1"/>
<dbReference type="InParanoid" id="Q6ZUU3"/>
<dbReference type="OMA" id="ISLPKMC"/>
<dbReference type="OrthoDB" id="9537476at2759"/>
<dbReference type="PAN-GO" id="Q6ZUU3">
    <property type="GO annotations" value="0 GO annotations based on evolutionary models"/>
</dbReference>
<dbReference type="PhylomeDB" id="Q6ZUU3"/>
<dbReference type="PathwayCommons" id="Q6ZUU3"/>
<dbReference type="BioGRID-ORCS" id="401089">
    <property type="hits" value="15 hits in 1147 CRISPR screens"/>
</dbReference>
<dbReference type="GenomeRNAi" id="401089"/>
<dbReference type="Pharos" id="Q6ZUU3">
    <property type="development level" value="Tdark"/>
</dbReference>
<dbReference type="PRO" id="PR:Q6ZUU3"/>
<dbReference type="Proteomes" id="UP000005640">
    <property type="component" value="Chromosome 3"/>
</dbReference>
<dbReference type="RNAct" id="Q6ZUU3">
    <property type="molecule type" value="protein"/>
</dbReference>
<dbReference type="Bgee" id="ENSG00000206262">
    <property type="expression patterns" value="Expressed in left ovary and 54 other cell types or tissues"/>
</dbReference>
<dbReference type="ExpressionAtlas" id="Q6ZUU3">
    <property type="expression patterns" value="baseline and differential"/>
</dbReference>
<dbReference type="GO" id="GO:0001650">
    <property type="term" value="C:fibrillar center"/>
    <property type="evidence" value="ECO:0000314"/>
    <property type="project" value="HPA"/>
</dbReference>
<proteinExistence type="evidence at transcript level"/>
<feature type="chain" id="PRO_0000348439" description="FOXL2 neighbor protein">
    <location>
        <begin position="1"/>
        <end position="175"/>
    </location>
</feature>
<feature type="region of interest" description="Disordered" evidence="1">
    <location>
        <begin position="1"/>
        <end position="39"/>
    </location>
</feature>
<feature type="region of interest" description="Disordered" evidence="1">
    <location>
        <begin position="70"/>
        <end position="100"/>
    </location>
</feature>
<name>FOXNB_HUMAN</name>
<reference key="1">
    <citation type="journal article" date="2004" name="Nat. Genet.">
        <title>Complete sequencing and characterization of 21,243 full-length human cDNAs.</title>
        <authorList>
            <person name="Ota T."/>
            <person name="Suzuki Y."/>
            <person name="Nishikawa T."/>
            <person name="Otsuki T."/>
            <person name="Sugiyama T."/>
            <person name="Irie R."/>
            <person name="Wakamatsu A."/>
            <person name="Hayashi K."/>
            <person name="Sato H."/>
            <person name="Nagai K."/>
            <person name="Kimura K."/>
            <person name="Makita H."/>
            <person name="Sekine M."/>
            <person name="Obayashi M."/>
            <person name="Nishi T."/>
            <person name="Shibahara T."/>
            <person name="Tanaka T."/>
            <person name="Ishii S."/>
            <person name="Yamamoto J."/>
            <person name="Saito K."/>
            <person name="Kawai Y."/>
            <person name="Isono Y."/>
            <person name="Nakamura Y."/>
            <person name="Nagahari K."/>
            <person name="Murakami K."/>
            <person name="Yasuda T."/>
            <person name="Iwayanagi T."/>
            <person name="Wagatsuma M."/>
            <person name="Shiratori A."/>
            <person name="Sudo H."/>
            <person name="Hosoiri T."/>
            <person name="Kaku Y."/>
            <person name="Kodaira H."/>
            <person name="Kondo H."/>
            <person name="Sugawara M."/>
            <person name="Takahashi M."/>
            <person name="Kanda K."/>
            <person name="Yokoi T."/>
            <person name="Furuya T."/>
            <person name="Kikkawa E."/>
            <person name="Omura Y."/>
            <person name="Abe K."/>
            <person name="Kamihara K."/>
            <person name="Katsuta N."/>
            <person name="Sato K."/>
            <person name="Tanikawa M."/>
            <person name="Yamazaki M."/>
            <person name="Ninomiya K."/>
            <person name="Ishibashi T."/>
            <person name="Yamashita H."/>
            <person name="Murakawa K."/>
            <person name="Fujimori K."/>
            <person name="Tanai H."/>
            <person name="Kimata M."/>
            <person name="Watanabe M."/>
            <person name="Hiraoka S."/>
            <person name="Chiba Y."/>
            <person name="Ishida S."/>
            <person name="Ono Y."/>
            <person name="Takiguchi S."/>
            <person name="Watanabe S."/>
            <person name="Yosida M."/>
            <person name="Hotuta T."/>
            <person name="Kusano J."/>
            <person name="Kanehori K."/>
            <person name="Takahashi-Fujii A."/>
            <person name="Hara H."/>
            <person name="Tanase T.-O."/>
            <person name="Nomura Y."/>
            <person name="Togiya S."/>
            <person name="Komai F."/>
            <person name="Hara R."/>
            <person name="Takeuchi K."/>
            <person name="Arita M."/>
            <person name="Imose N."/>
            <person name="Musashino K."/>
            <person name="Yuuki H."/>
            <person name="Oshima A."/>
            <person name="Sasaki N."/>
            <person name="Aotsuka S."/>
            <person name="Yoshikawa Y."/>
            <person name="Matsunawa H."/>
            <person name="Ichihara T."/>
            <person name="Shiohata N."/>
            <person name="Sano S."/>
            <person name="Moriya S."/>
            <person name="Momiyama H."/>
            <person name="Satoh N."/>
            <person name="Takami S."/>
            <person name="Terashima Y."/>
            <person name="Suzuki O."/>
            <person name="Nakagawa S."/>
            <person name="Senoh A."/>
            <person name="Mizoguchi H."/>
            <person name="Goto Y."/>
            <person name="Shimizu F."/>
            <person name="Wakebe H."/>
            <person name="Hishigaki H."/>
            <person name="Watanabe T."/>
            <person name="Sugiyama A."/>
            <person name="Takemoto M."/>
            <person name="Kawakami B."/>
            <person name="Yamazaki M."/>
            <person name="Watanabe K."/>
            <person name="Kumagai A."/>
            <person name="Itakura S."/>
            <person name="Fukuzumi Y."/>
            <person name="Fujimori Y."/>
            <person name="Komiyama M."/>
            <person name="Tashiro H."/>
            <person name="Tanigami A."/>
            <person name="Fujiwara T."/>
            <person name="Ono T."/>
            <person name="Yamada K."/>
            <person name="Fujii Y."/>
            <person name="Ozaki K."/>
            <person name="Hirao M."/>
            <person name="Ohmori Y."/>
            <person name="Kawabata A."/>
            <person name="Hikiji T."/>
            <person name="Kobatake N."/>
            <person name="Inagaki H."/>
            <person name="Ikema Y."/>
            <person name="Okamoto S."/>
            <person name="Okitani R."/>
            <person name="Kawakami T."/>
            <person name="Noguchi S."/>
            <person name="Itoh T."/>
            <person name="Shigeta K."/>
            <person name="Senba T."/>
            <person name="Matsumura K."/>
            <person name="Nakajima Y."/>
            <person name="Mizuno T."/>
            <person name="Morinaga M."/>
            <person name="Sasaki M."/>
            <person name="Togashi T."/>
            <person name="Oyama M."/>
            <person name="Hata H."/>
            <person name="Watanabe M."/>
            <person name="Komatsu T."/>
            <person name="Mizushima-Sugano J."/>
            <person name="Satoh T."/>
            <person name="Shirai Y."/>
            <person name="Takahashi Y."/>
            <person name="Nakagawa K."/>
            <person name="Okumura K."/>
            <person name="Nagase T."/>
            <person name="Nomura N."/>
            <person name="Kikuchi H."/>
            <person name="Masuho Y."/>
            <person name="Yamashita R."/>
            <person name="Nakai K."/>
            <person name="Yada T."/>
            <person name="Nakamura Y."/>
            <person name="Ohara O."/>
            <person name="Isogai T."/>
            <person name="Sugano S."/>
        </authorList>
    </citation>
    <scope>NUCLEOTIDE SEQUENCE [LARGE SCALE MRNA]</scope>
</reference>
<reference key="2">
    <citation type="journal article" date="2006" name="Nature">
        <title>The DNA sequence, annotation and analysis of human chromosome 3.</title>
        <authorList>
            <person name="Muzny D.M."/>
            <person name="Scherer S.E."/>
            <person name="Kaul R."/>
            <person name="Wang J."/>
            <person name="Yu J."/>
            <person name="Sudbrak R."/>
            <person name="Buhay C.J."/>
            <person name="Chen R."/>
            <person name="Cree A."/>
            <person name="Ding Y."/>
            <person name="Dugan-Rocha S."/>
            <person name="Gill R."/>
            <person name="Gunaratne P."/>
            <person name="Harris R.A."/>
            <person name="Hawes A.C."/>
            <person name="Hernandez J."/>
            <person name="Hodgson A.V."/>
            <person name="Hume J."/>
            <person name="Jackson A."/>
            <person name="Khan Z.M."/>
            <person name="Kovar-Smith C."/>
            <person name="Lewis L.R."/>
            <person name="Lozado R.J."/>
            <person name="Metzker M.L."/>
            <person name="Milosavljevic A."/>
            <person name="Miner G.R."/>
            <person name="Morgan M.B."/>
            <person name="Nazareth L.V."/>
            <person name="Scott G."/>
            <person name="Sodergren E."/>
            <person name="Song X.-Z."/>
            <person name="Steffen D."/>
            <person name="Wei S."/>
            <person name="Wheeler D.A."/>
            <person name="Wright M.W."/>
            <person name="Worley K.C."/>
            <person name="Yuan Y."/>
            <person name="Zhang Z."/>
            <person name="Adams C.Q."/>
            <person name="Ansari-Lari M.A."/>
            <person name="Ayele M."/>
            <person name="Brown M.J."/>
            <person name="Chen G."/>
            <person name="Chen Z."/>
            <person name="Clendenning J."/>
            <person name="Clerc-Blankenburg K.P."/>
            <person name="Chen R."/>
            <person name="Chen Z."/>
            <person name="Davis C."/>
            <person name="Delgado O."/>
            <person name="Dinh H.H."/>
            <person name="Dong W."/>
            <person name="Draper H."/>
            <person name="Ernst S."/>
            <person name="Fu G."/>
            <person name="Gonzalez-Garay M.L."/>
            <person name="Garcia D.K."/>
            <person name="Gillett W."/>
            <person name="Gu J."/>
            <person name="Hao B."/>
            <person name="Haugen E."/>
            <person name="Havlak P."/>
            <person name="He X."/>
            <person name="Hennig S."/>
            <person name="Hu S."/>
            <person name="Huang W."/>
            <person name="Jackson L.R."/>
            <person name="Jacob L.S."/>
            <person name="Kelly S.H."/>
            <person name="Kube M."/>
            <person name="Levy R."/>
            <person name="Li Z."/>
            <person name="Liu B."/>
            <person name="Liu J."/>
            <person name="Liu W."/>
            <person name="Lu J."/>
            <person name="Maheshwari M."/>
            <person name="Nguyen B.-V."/>
            <person name="Okwuonu G.O."/>
            <person name="Palmeiri A."/>
            <person name="Pasternak S."/>
            <person name="Perez L.M."/>
            <person name="Phelps K.A."/>
            <person name="Plopper F.J."/>
            <person name="Qiang B."/>
            <person name="Raymond C."/>
            <person name="Rodriguez R."/>
            <person name="Saenphimmachak C."/>
            <person name="Santibanez J."/>
            <person name="Shen H."/>
            <person name="Shen Y."/>
            <person name="Subramanian S."/>
            <person name="Tabor P.E."/>
            <person name="Verduzco D."/>
            <person name="Waldron L."/>
            <person name="Wang J."/>
            <person name="Wang J."/>
            <person name="Wang Q."/>
            <person name="Williams G.A."/>
            <person name="Wong G.K.-S."/>
            <person name="Yao Z."/>
            <person name="Zhang J."/>
            <person name="Zhang X."/>
            <person name="Zhao G."/>
            <person name="Zhou J."/>
            <person name="Zhou Y."/>
            <person name="Nelson D."/>
            <person name="Lehrach H."/>
            <person name="Reinhardt R."/>
            <person name="Naylor S.L."/>
            <person name="Yang H."/>
            <person name="Olson M."/>
            <person name="Weinstock G."/>
            <person name="Gibbs R.A."/>
        </authorList>
    </citation>
    <scope>NUCLEOTIDE SEQUENCE [LARGE SCALE GENOMIC DNA]</scope>
</reference>
<sequence length="175" mass="18625">MTRTPVGSARTRPKPRKLGPQRGKALQASSRLSESPALVKKRMPDACTLGRAGIGLPKMCLHMAVRHSKAQKTGPGILQQRQKPPAPRASGGPALLGKRRGCSEAGSASLEPLSSSRAAAGCLNQVPLSPFLAGPRNTRRLPAPERERIELAATLCLEGWPLRCLASKGKLHCVY</sequence>